<evidence type="ECO:0000255" key="1">
    <source>
        <dbReference type="HAMAP-Rule" id="MF_00178"/>
    </source>
</evidence>
<accession>A4SGN3</accession>
<feature type="chain" id="PRO_1000077243" description="6,7-dimethyl-8-ribityllumazine synthase">
    <location>
        <begin position="1"/>
        <end position="155"/>
    </location>
</feature>
<feature type="active site" description="Proton donor" evidence="1">
    <location>
        <position position="90"/>
    </location>
</feature>
<feature type="binding site" evidence="1">
    <location>
        <position position="24"/>
    </location>
    <ligand>
        <name>5-amino-6-(D-ribitylamino)uracil</name>
        <dbReference type="ChEBI" id="CHEBI:15934"/>
    </ligand>
</feature>
<feature type="binding site" evidence="1">
    <location>
        <begin position="58"/>
        <end position="60"/>
    </location>
    <ligand>
        <name>5-amino-6-(D-ribitylamino)uracil</name>
        <dbReference type="ChEBI" id="CHEBI:15934"/>
    </ligand>
</feature>
<feature type="binding site" evidence="1">
    <location>
        <begin position="82"/>
        <end position="84"/>
    </location>
    <ligand>
        <name>5-amino-6-(D-ribitylamino)uracil</name>
        <dbReference type="ChEBI" id="CHEBI:15934"/>
    </ligand>
</feature>
<feature type="binding site" evidence="1">
    <location>
        <begin position="87"/>
        <end position="88"/>
    </location>
    <ligand>
        <name>(2S)-2-hydroxy-3-oxobutyl phosphate</name>
        <dbReference type="ChEBI" id="CHEBI:58830"/>
    </ligand>
</feature>
<feature type="binding site" evidence="1">
    <location>
        <position position="115"/>
    </location>
    <ligand>
        <name>5-amino-6-(D-ribitylamino)uracil</name>
        <dbReference type="ChEBI" id="CHEBI:15934"/>
    </ligand>
</feature>
<feature type="binding site" evidence="1">
    <location>
        <position position="129"/>
    </location>
    <ligand>
        <name>(2S)-2-hydroxy-3-oxobutyl phosphate</name>
        <dbReference type="ChEBI" id="CHEBI:58830"/>
    </ligand>
</feature>
<gene>
    <name evidence="1" type="primary">ribH</name>
    <name type="ordered locus">Cvib_1632</name>
</gene>
<keyword id="KW-0686">Riboflavin biosynthesis</keyword>
<keyword id="KW-0808">Transferase</keyword>
<dbReference type="EC" id="2.5.1.78" evidence="1"/>
<dbReference type="EMBL" id="CP000607">
    <property type="protein sequence ID" value="ABP37642.1"/>
    <property type="molecule type" value="Genomic_DNA"/>
</dbReference>
<dbReference type="SMR" id="A4SGN3"/>
<dbReference type="STRING" id="290318.Cvib_1632"/>
<dbReference type="KEGG" id="pvi:Cvib_1632"/>
<dbReference type="eggNOG" id="COG0054">
    <property type="taxonomic scope" value="Bacteria"/>
</dbReference>
<dbReference type="HOGENOM" id="CLU_089358_1_1_10"/>
<dbReference type="OrthoDB" id="9809709at2"/>
<dbReference type="UniPathway" id="UPA00275">
    <property type="reaction ID" value="UER00404"/>
</dbReference>
<dbReference type="GO" id="GO:0005829">
    <property type="term" value="C:cytosol"/>
    <property type="evidence" value="ECO:0007669"/>
    <property type="project" value="TreeGrafter"/>
</dbReference>
<dbReference type="GO" id="GO:0009349">
    <property type="term" value="C:riboflavin synthase complex"/>
    <property type="evidence" value="ECO:0007669"/>
    <property type="project" value="InterPro"/>
</dbReference>
<dbReference type="GO" id="GO:0000906">
    <property type="term" value="F:6,7-dimethyl-8-ribityllumazine synthase activity"/>
    <property type="evidence" value="ECO:0007669"/>
    <property type="project" value="UniProtKB-UniRule"/>
</dbReference>
<dbReference type="GO" id="GO:0009231">
    <property type="term" value="P:riboflavin biosynthetic process"/>
    <property type="evidence" value="ECO:0007669"/>
    <property type="project" value="UniProtKB-UniRule"/>
</dbReference>
<dbReference type="CDD" id="cd09209">
    <property type="entry name" value="Lumazine_synthase-I"/>
    <property type="match status" value="1"/>
</dbReference>
<dbReference type="FunFam" id="3.40.50.960:FF:000001">
    <property type="entry name" value="6,7-dimethyl-8-ribityllumazine synthase"/>
    <property type="match status" value="1"/>
</dbReference>
<dbReference type="Gene3D" id="3.40.50.960">
    <property type="entry name" value="Lumazine/riboflavin synthase"/>
    <property type="match status" value="1"/>
</dbReference>
<dbReference type="HAMAP" id="MF_00178">
    <property type="entry name" value="Lumazine_synth"/>
    <property type="match status" value="1"/>
</dbReference>
<dbReference type="InterPro" id="IPR034964">
    <property type="entry name" value="LS"/>
</dbReference>
<dbReference type="InterPro" id="IPR002180">
    <property type="entry name" value="LS/RS"/>
</dbReference>
<dbReference type="InterPro" id="IPR036467">
    <property type="entry name" value="LS/RS_sf"/>
</dbReference>
<dbReference type="NCBIfam" id="TIGR00114">
    <property type="entry name" value="lumazine-synth"/>
    <property type="match status" value="1"/>
</dbReference>
<dbReference type="NCBIfam" id="NF000812">
    <property type="entry name" value="PRK00061.1-4"/>
    <property type="match status" value="1"/>
</dbReference>
<dbReference type="PANTHER" id="PTHR21058:SF0">
    <property type="entry name" value="6,7-DIMETHYL-8-RIBITYLLUMAZINE SYNTHASE"/>
    <property type="match status" value="1"/>
</dbReference>
<dbReference type="PANTHER" id="PTHR21058">
    <property type="entry name" value="6,7-DIMETHYL-8-RIBITYLLUMAZINE SYNTHASE DMRL SYNTHASE LUMAZINE SYNTHASE"/>
    <property type="match status" value="1"/>
</dbReference>
<dbReference type="Pfam" id="PF00885">
    <property type="entry name" value="DMRL_synthase"/>
    <property type="match status" value="1"/>
</dbReference>
<dbReference type="SUPFAM" id="SSF52121">
    <property type="entry name" value="Lumazine synthase"/>
    <property type="match status" value="1"/>
</dbReference>
<reference key="1">
    <citation type="submission" date="2007-03" db="EMBL/GenBank/DDBJ databases">
        <title>Complete sequence of Prosthecochloris vibrioformis DSM 265.</title>
        <authorList>
            <consortium name="US DOE Joint Genome Institute"/>
            <person name="Copeland A."/>
            <person name="Lucas S."/>
            <person name="Lapidus A."/>
            <person name="Barry K."/>
            <person name="Detter J.C."/>
            <person name="Glavina del Rio T."/>
            <person name="Hammon N."/>
            <person name="Israni S."/>
            <person name="Pitluck S."/>
            <person name="Schmutz J."/>
            <person name="Larimer F."/>
            <person name="Land M."/>
            <person name="Hauser L."/>
            <person name="Mikhailova N."/>
            <person name="Li T."/>
            <person name="Overmann J."/>
            <person name="Schuster S.C."/>
            <person name="Bryant D.A."/>
            <person name="Richardson P."/>
        </authorList>
    </citation>
    <scope>NUCLEOTIDE SEQUENCE [LARGE SCALE GENOMIC DNA]</scope>
    <source>
        <strain>DSM 265 / 1930</strain>
    </source>
</reference>
<comment type="function">
    <text evidence="1">Catalyzes the formation of 6,7-dimethyl-8-ribityllumazine by condensation of 5-amino-6-(D-ribitylamino)uracil with 3,4-dihydroxy-2-butanone 4-phosphate. This is the penultimate step in the biosynthesis of riboflavin.</text>
</comment>
<comment type="catalytic activity">
    <reaction evidence="1">
        <text>(2S)-2-hydroxy-3-oxobutyl phosphate + 5-amino-6-(D-ribitylamino)uracil = 6,7-dimethyl-8-(1-D-ribityl)lumazine + phosphate + 2 H2O + H(+)</text>
        <dbReference type="Rhea" id="RHEA:26152"/>
        <dbReference type="ChEBI" id="CHEBI:15377"/>
        <dbReference type="ChEBI" id="CHEBI:15378"/>
        <dbReference type="ChEBI" id="CHEBI:15934"/>
        <dbReference type="ChEBI" id="CHEBI:43474"/>
        <dbReference type="ChEBI" id="CHEBI:58201"/>
        <dbReference type="ChEBI" id="CHEBI:58830"/>
        <dbReference type="EC" id="2.5.1.78"/>
    </reaction>
</comment>
<comment type="pathway">
    <text evidence="1">Cofactor biosynthesis; riboflavin biosynthesis; riboflavin from 2-hydroxy-3-oxobutyl phosphate and 5-amino-6-(D-ribitylamino)uracil: step 1/2.</text>
</comment>
<comment type="similarity">
    <text evidence="1">Belongs to the DMRL synthase family.</text>
</comment>
<sequence>MQIQQIEGGFGAQDARIALVVSRFNDFIGQKLVEGAIDCIRRNGGSEENIAIYRCPGAFELPMVAKKVALTGKYDAVVTLGAIIRGSTPHFDVIAAEATKGIAQASLETGVPIAFGVLTTENIEQAIERAGTKAGNKGFDAALTAIEMINLYRAM</sequence>
<proteinExistence type="inferred from homology"/>
<organism>
    <name type="scientific">Chlorobium phaeovibrioides (strain DSM 265 / 1930)</name>
    <name type="common">Prosthecochloris vibrioformis (strain DSM 265)</name>
    <dbReference type="NCBI Taxonomy" id="290318"/>
    <lineage>
        <taxon>Bacteria</taxon>
        <taxon>Pseudomonadati</taxon>
        <taxon>Chlorobiota</taxon>
        <taxon>Chlorobiia</taxon>
        <taxon>Chlorobiales</taxon>
        <taxon>Chlorobiaceae</taxon>
        <taxon>Chlorobium/Pelodictyon group</taxon>
        <taxon>Chlorobium</taxon>
    </lineage>
</organism>
<name>RISB_CHLPM</name>
<protein>
    <recommendedName>
        <fullName evidence="1">6,7-dimethyl-8-ribityllumazine synthase</fullName>
        <shortName evidence="1">DMRL synthase</shortName>
        <shortName evidence="1">LS</shortName>
        <shortName evidence="1">Lumazine synthase</shortName>
        <ecNumber evidence="1">2.5.1.78</ecNumber>
    </recommendedName>
</protein>